<evidence type="ECO:0000250" key="1">
    <source>
        <dbReference type="UniProtKB" id="P10258"/>
    </source>
</evidence>
<evidence type="ECO:0000255" key="2">
    <source>
        <dbReference type="PROSITE-ProRule" id="PRU00047"/>
    </source>
</evidence>
<evidence type="ECO:0000256" key="3">
    <source>
        <dbReference type="SAM" id="MobiDB-lite"/>
    </source>
</evidence>
<evidence type="ECO:0000269" key="4">
    <source>
    </source>
</evidence>
<evidence type="ECO:0000269" key="5">
    <source>
    </source>
</evidence>
<evidence type="ECO:0000305" key="6"/>
<evidence type="ECO:0007829" key="7">
    <source>
        <dbReference type="PDB" id="1DSQ"/>
    </source>
</evidence>
<evidence type="ECO:0007829" key="8">
    <source>
        <dbReference type="PDB" id="1DSV"/>
    </source>
</evidence>
<dbReference type="EMBL" id="AF228552">
    <property type="protein sequence ID" value="AAF31472.1"/>
    <property type="molecule type" value="Genomic_DNA"/>
</dbReference>
<dbReference type="EMBL" id="M16766">
    <property type="protein sequence ID" value="AAA66623.1"/>
    <property type="molecule type" value="Genomic_RNA"/>
</dbReference>
<dbReference type="PIR" id="A29029">
    <property type="entry name" value="A29029"/>
</dbReference>
<dbReference type="PDB" id="1DSQ">
    <property type="method" value="NMR"/>
    <property type="chains" value="A=523-543"/>
</dbReference>
<dbReference type="PDB" id="1DSV">
    <property type="method" value="NMR"/>
    <property type="chains" value="A=550-580"/>
</dbReference>
<dbReference type="PDBsum" id="1DSQ"/>
<dbReference type="PDBsum" id="1DSV"/>
<dbReference type="BMRB" id="P11284"/>
<dbReference type="SMR" id="P11284"/>
<dbReference type="ELM" id="P11284"/>
<dbReference type="iPTMnet" id="P11284"/>
<dbReference type="EvolutionaryTrace" id="P11284"/>
<dbReference type="Proteomes" id="UP000006540">
    <property type="component" value="Genome"/>
</dbReference>
<dbReference type="GO" id="GO:0019013">
    <property type="term" value="C:viral nucleocapsid"/>
    <property type="evidence" value="ECO:0007669"/>
    <property type="project" value="UniProtKB-KW"/>
</dbReference>
<dbReference type="GO" id="GO:0003677">
    <property type="term" value="F:DNA binding"/>
    <property type="evidence" value="ECO:0007669"/>
    <property type="project" value="UniProtKB-KW"/>
</dbReference>
<dbReference type="GO" id="GO:0000166">
    <property type="term" value="F:nucleotide binding"/>
    <property type="evidence" value="ECO:0007669"/>
    <property type="project" value="UniProtKB-KW"/>
</dbReference>
<dbReference type="GO" id="GO:0039660">
    <property type="term" value="F:structural constituent of virion"/>
    <property type="evidence" value="ECO:0007669"/>
    <property type="project" value="UniProtKB-KW"/>
</dbReference>
<dbReference type="GO" id="GO:0008270">
    <property type="term" value="F:zinc ion binding"/>
    <property type="evidence" value="ECO:0007669"/>
    <property type="project" value="UniProtKB-KW"/>
</dbReference>
<dbReference type="GO" id="GO:0039702">
    <property type="term" value="P:viral budding via host ESCRT complex"/>
    <property type="evidence" value="ECO:0007669"/>
    <property type="project" value="UniProtKB-KW"/>
</dbReference>
<dbReference type="GO" id="GO:0075523">
    <property type="term" value="P:viral translational frameshifting"/>
    <property type="evidence" value="ECO:0007669"/>
    <property type="project" value="UniProtKB-KW"/>
</dbReference>
<dbReference type="FunFam" id="1.10.150.490:FF:000001">
    <property type="entry name" value="Gag polyprotein"/>
    <property type="match status" value="1"/>
</dbReference>
<dbReference type="FunFam" id="1.10.375.10:FF:000007">
    <property type="entry name" value="Gag polyprotein"/>
    <property type="match status" value="1"/>
</dbReference>
<dbReference type="FunFam" id="4.10.60.10:FF:000036">
    <property type="entry name" value="Gag polyprotein"/>
    <property type="match status" value="1"/>
</dbReference>
<dbReference type="Gene3D" id="1.10.1200.30">
    <property type="match status" value="1"/>
</dbReference>
<dbReference type="Gene3D" id="1.10.375.10">
    <property type="entry name" value="Human Immunodeficiency Virus Type 1 Capsid Protein"/>
    <property type="match status" value="1"/>
</dbReference>
<dbReference type="Gene3D" id="1.10.150.490">
    <property type="entry name" value="Retroviral GAG p10 protein"/>
    <property type="match status" value="1"/>
</dbReference>
<dbReference type="Gene3D" id="4.10.60.10">
    <property type="entry name" value="Zinc finger, CCHC-type"/>
    <property type="match status" value="1"/>
</dbReference>
<dbReference type="InterPro" id="IPR003322">
    <property type="entry name" value="B_retro_matrix"/>
</dbReference>
<dbReference type="InterPro" id="IPR038124">
    <property type="entry name" value="B_retro_matrix_sf"/>
</dbReference>
<dbReference type="InterPro" id="IPR045345">
    <property type="entry name" value="Gag_p24_C"/>
</dbReference>
<dbReference type="InterPro" id="IPR050195">
    <property type="entry name" value="Primate_lentivir_Gag_pol-like"/>
</dbReference>
<dbReference type="InterPro" id="IPR008916">
    <property type="entry name" value="Retrov_capsid_C"/>
</dbReference>
<dbReference type="InterPro" id="IPR008919">
    <property type="entry name" value="Retrov_capsid_N"/>
</dbReference>
<dbReference type="InterPro" id="IPR010999">
    <property type="entry name" value="Retrovr_matrix"/>
</dbReference>
<dbReference type="InterPro" id="IPR001878">
    <property type="entry name" value="Znf_CCHC"/>
</dbReference>
<dbReference type="InterPro" id="IPR036875">
    <property type="entry name" value="Znf_CCHC_sf"/>
</dbReference>
<dbReference type="PANTHER" id="PTHR40389">
    <property type="entry name" value="ENDOGENOUS RETROVIRUS GROUP K MEMBER 24 GAG POLYPROTEIN-RELATED"/>
    <property type="match status" value="1"/>
</dbReference>
<dbReference type="PANTHER" id="PTHR40389:SF3">
    <property type="entry name" value="IGE-BINDING PROTEIN"/>
    <property type="match status" value="1"/>
</dbReference>
<dbReference type="Pfam" id="PF02337">
    <property type="entry name" value="Gag_p10"/>
    <property type="match status" value="1"/>
</dbReference>
<dbReference type="Pfam" id="PF00607">
    <property type="entry name" value="Gag_p24"/>
    <property type="match status" value="1"/>
</dbReference>
<dbReference type="Pfam" id="PF19317">
    <property type="entry name" value="Gag_p24_C"/>
    <property type="match status" value="1"/>
</dbReference>
<dbReference type="Pfam" id="PF00098">
    <property type="entry name" value="zf-CCHC"/>
    <property type="match status" value="1"/>
</dbReference>
<dbReference type="Pfam" id="PF14787">
    <property type="entry name" value="zf-CCHC_5"/>
    <property type="match status" value="1"/>
</dbReference>
<dbReference type="SMART" id="SM00343">
    <property type="entry name" value="ZnF_C2HC"/>
    <property type="match status" value="2"/>
</dbReference>
<dbReference type="SUPFAM" id="SSF47836">
    <property type="entry name" value="Retroviral matrix proteins"/>
    <property type="match status" value="1"/>
</dbReference>
<dbReference type="SUPFAM" id="SSF47353">
    <property type="entry name" value="Retrovirus capsid dimerization domain-like"/>
    <property type="match status" value="1"/>
</dbReference>
<dbReference type="SUPFAM" id="SSF47943">
    <property type="entry name" value="Retrovirus capsid protein, N-terminal core domain"/>
    <property type="match status" value="1"/>
</dbReference>
<dbReference type="SUPFAM" id="SSF57756">
    <property type="entry name" value="Retrovirus zinc finger-like domains"/>
    <property type="match status" value="2"/>
</dbReference>
<dbReference type="PROSITE" id="PS50158">
    <property type="entry name" value="ZF_CCHC"/>
    <property type="match status" value="1"/>
</dbReference>
<comment type="function">
    <molecule>Matrix protein p10</molecule>
    <text evidence="6">Matrix protein.</text>
</comment>
<comment type="function">
    <molecule>Nucleocapsid protein p14</molecule>
    <text evidence="6">Binds strongly to viral nucleic acids and promote their aggregation. Also destabilizes the nucleic acids duplexes via highly structured zinc-binding motifs.</text>
</comment>
<comment type="function">
    <molecule>Capsid protein p27</molecule>
    <text evidence="6">Capsid protein.</text>
</comment>
<comment type="subunit">
    <molecule>Matrix protein p10</molecule>
    <text evidence="1">Homodimer; when myristoylated.</text>
</comment>
<comment type="subcellular location">
    <molecule>Matrix protein p10</molecule>
    <subcellularLocation>
        <location evidence="1">Virion</location>
    </subcellularLocation>
</comment>
<comment type="subcellular location">
    <molecule>Capsid protein p27</molecule>
    <subcellularLocation>
        <location evidence="1">Virion</location>
    </subcellularLocation>
</comment>
<comment type="subcellular location">
    <molecule>Nucleocapsid protein p14</molecule>
    <subcellularLocation>
        <location evidence="1">Virion</location>
    </subcellularLocation>
</comment>
<comment type="alternative products">
    <event type="ribosomal frameshifting"/>
    <isoform>
        <id>P11284-1</id>
        <name>Gag polyprotein</name>
        <sequence type="displayed"/>
    </isoform>
    <isoform>
        <id>Q9IZT2-1</id>
        <name>Gag-Pro polyprotein</name>
        <sequence type="external"/>
    </isoform>
    <isoform>
        <id>P11283-1</id>
        <name>Gag-Pro-Pol polyprotein</name>
        <sequence type="external"/>
    </isoform>
</comment>
<comment type="domain">
    <molecule>Gag polyprotein</molecule>
    <text evidence="6">Late-budding domains (L domains) are short sequence motifs essential for viral particle release. They can occur individually or in close proximity within structural proteins. They interacts with sorting cellular proteins of the multivesicular body (MVB) pathway. Most of these proteins are class E vacuolar protein sorting factors belonging to ESCRT-I, ESCRT-II or ESCRT-III complexes. Gag-p27 contains one L domain: a PTAP/PSAP motif, which interacts with the UEV domain of TSG101.</text>
</comment>
<comment type="PTM">
    <molecule>Gag polyprotein</molecule>
    <text evidence="4">Myristoylated. Myristoylation of the matrix (MA) domain mediates the transport and binding of Gag polyproteins to the host plasma membrane and is required for the assembly of viral particles.</text>
</comment>
<comment type="PTM">
    <molecule>Gag polyprotein</molecule>
    <text evidence="4">Specific enzymatic cleavages in vivo yield mature proteins.</text>
</comment>
<comment type="miscellaneous">
    <molecule>Isoform Gag polyprotein</molecule>
    <text evidence="5">Produced by conventional translation.</text>
</comment>
<organism>
    <name type="scientific">Mouse mammary tumor virus (strain C3H)</name>
    <name type="common">MMTV</name>
    <dbReference type="NCBI Taxonomy" id="11759"/>
    <lineage>
        <taxon>Viruses</taxon>
        <taxon>Riboviria</taxon>
        <taxon>Pararnavirae</taxon>
        <taxon>Artverviricota</taxon>
        <taxon>Revtraviricetes</taxon>
        <taxon>Ortervirales</taxon>
        <taxon>Retroviridae</taxon>
        <taxon>Orthoretrovirinae</taxon>
        <taxon>Betaretrovirus</taxon>
        <taxon>Mouse mammary tumor virus</taxon>
    </lineage>
</organism>
<keyword id="KW-0002">3D-structure</keyword>
<keyword id="KW-0167">Capsid protein</keyword>
<keyword id="KW-0903">Direct protein sequencing</keyword>
<keyword id="KW-0238">DNA-binding</keyword>
<keyword id="KW-0945">Host-virus interaction</keyword>
<keyword id="KW-0449">Lipoprotein</keyword>
<keyword id="KW-0479">Metal-binding</keyword>
<keyword id="KW-0519">Myristate</keyword>
<keyword id="KW-0547">Nucleotide-binding</keyword>
<keyword id="KW-0597">Phosphoprotein</keyword>
<keyword id="KW-1185">Reference proteome</keyword>
<keyword id="KW-0677">Repeat</keyword>
<keyword id="KW-0688">Ribosomal frameshifting</keyword>
<keyword id="KW-1198">Viral budding</keyword>
<keyword id="KW-1187">Viral budding via the host ESCRT complexes</keyword>
<keyword id="KW-0468">Viral matrix protein</keyword>
<keyword id="KW-0543">Viral nucleoprotein</keyword>
<keyword id="KW-1188">Viral release from host cell</keyword>
<keyword id="KW-0946">Virion</keyword>
<keyword id="KW-0862">Zinc</keyword>
<keyword id="KW-0863">Zinc-finger</keyword>
<sequence>MGVSGSKGQKLFVSVLQRLLSERGLHVKESSAIEFYQFLIKVSPWFPEEGGLNLQDWKRVGREMKKYAAEHGTDSIPKQAYPIWLQLREILTEQSDLVLLSAEAKSVTEEELEEGLTGLLSASSQEKTYGTRGTAYAEIDTEVDKLSEHIYDEPYEEKEKADKNEEKDHVRKVKKIVQRKENSEHKRKEKDQKAFLATDWNNDDLSPEDWDDLEEQAAHYHDDDELILPVKRKVDKKKPLALRRKPLPPVGFAGAMAEAREKGDLTFTFPVVFMGESDDDDTPVWEPLPLKTLKELQSAVRTMGPSAPYTLQVVDMVASQWLTPSDWHQTARATLSPGDYVLWRTEYEEKSKETVQKTAGKRKGKVSLDMLLGTGQFLSPSSQIKLSKDVLKDVTTNAVLAWRAIPPPGVKKTVLAGLKQGNEESYETFISRLEEAVYRVMPRGEGSDILIKQLAWENANSLCQDLIRPMRKTGTMQDYIRACLDASPAVVQGMAYAAAMRGQKYSTFVKQTYGGGKGGQGSKGPVCFSCGKTGHIKRDCKEEKGSKRAPPGLCPRCKKGYHWKSECKSKFDKDGNPLPPLETNAENSKNL</sequence>
<reference key="1">
    <citation type="journal article" date="2000" name="J. Virol.">
        <title>Genetics of mouse mammary tumor virus-induced mammary tumors: linkage of tumor induction to the gag gene.</title>
        <authorList>
            <person name="Hook L.M."/>
            <person name="Agafonova Y."/>
            <person name="Ross S.R."/>
            <person name="Turner S.J."/>
            <person name="Golovkina T.V."/>
        </authorList>
    </citation>
    <scope>NUCLEOTIDE SEQUENCE [GENOMIC DNA]</scope>
</reference>
<reference key="2">
    <citation type="journal article" date="1987" name="Proc. Natl. Acad. Sci. U.S.A.">
        <title>Two efficient ribosomal frameshifting events are required for synthesis of mouse mammary tumor virus gag-related polyproteins.</title>
        <authorList>
            <person name="Jacks T."/>
            <person name="Townsley K."/>
            <person name="Varmus H.E."/>
            <person name="Majors J."/>
        </authorList>
    </citation>
    <scope>NUCLEOTIDE SEQUENCE [GENOMIC RNA] OF 359-591 AND 857-970</scope>
    <scope>RIBOSOMAL FRAMESHIFT</scope>
</reference>
<reference key="3">
    <citation type="journal article" date="1989" name="J. Virol.">
        <title>Analysis of gag proteins from mouse mammary tumor virus.</title>
        <authorList>
            <person name="Hizi A."/>
            <person name="Henderson L.E."/>
            <person name="Copeland T.D."/>
            <person name="Sowder R.C."/>
            <person name="Krutzsch H.C."/>
            <person name="Oroszlan S."/>
        </authorList>
    </citation>
    <scope>PROTEIN SEQUENCE OF 2-58; 65-116; 194-218; 227-241; 251-252; 270-276 AND 362-591</scope>
    <scope>PROTEOLYTIC CLEAVAGE (GAG POLYPROTEIN)</scope>
    <scope>MYRISTOYLATION AT GLY-2</scope>
</reference>
<reference key="4">
    <citation type="journal article" date="2000" name="Biochemistry">
        <title>The NMR structure of the nucleocapsid protein from the mouse mammary tumor virus reveals unusual folding of the C-terminal zinc knuckle.</title>
        <authorList>
            <person name="Klein D.J."/>
            <person name="Johnson P.E."/>
            <person name="Zollars E.S."/>
            <person name="De Guzman R.N."/>
            <person name="Summers M.F."/>
        </authorList>
    </citation>
    <scope>STRUCTURE BY NMR OF 523-543 AND 550-580</scope>
</reference>
<protein>
    <recommendedName>
        <fullName>Gag polyprotein</fullName>
    </recommendedName>
    <component>
        <recommendedName>
            <fullName>Matrix protein p10</fullName>
        </recommendedName>
    </component>
    <component>
        <recommendedName>
            <fullName>Phosphorylated protein pp21</fullName>
        </recommendedName>
    </component>
    <component>
        <recommendedName>
            <fullName>Protein p3</fullName>
        </recommendedName>
    </component>
    <component>
        <recommendedName>
            <fullName>Protein p8</fullName>
        </recommendedName>
    </component>
    <component>
        <recommendedName>
            <fullName>Protein n</fullName>
        </recommendedName>
    </component>
    <component>
        <recommendedName>
            <fullName>Capsid protein p27</fullName>
        </recommendedName>
    </component>
    <component>
        <recommendedName>
            <fullName>Nucleocapsid protein p14</fullName>
        </recommendedName>
    </component>
</protein>
<organismHost>
    <name type="scientific">Mus musculus</name>
    <name type="common">Mouse</name>
    <dbReference type="NCBI Taxonomy" id="10090"/>
</organismHost>
<proteinExistence type="evidence at protein level"/>
<gene>
    <name type="primary">gag</name>
</gene>
<feature type="initiator methionine" description="Removed; by host" evidence="4">
    <location>
        <position position="1"/>
    </location>
</feature>
<feature type="chain" id="PRO_0000442466" description="Gag polyprotein">
    <location>
        <begin position="2"/>
        <end position="591"/>
    </location>
</feature>
<feature type="chain" id="PRO_0000040927" description="Matrix protein p10">
    <location>
        <begin position="2"/>
        <end position="99"/>
    </location>
</feature>
<feature type="chain" id="PRO_0000040928" description="Phosphorylated protein pp21">
    <location>
        <begin position="100"/>
        <end position="195"/>
    </location>
</feature>
<feature type="chain" id="PRO_0000040929" description="Protein p3">
    <location>
        <begin position="196"/>
        <end position="228"/>
    </location>
</feature>
<feature type="chain" id="PRO_0000040930" description="Protein p8">
    <location>
        <begin position="229"/>
        <end position="254"/>
    </location>
</feature>
<feature type="chain" id="PRO_0000040931" description="Protein n">
    <location>
        <begin position="255"/>
        <end position="269"/>
    </location>
</feature>
<feature type="chain" id="PRO_0000040932" description="Capsid protein p27">
    <location>
        <begin position="270"/>
        <end position="496"/>
    </location>
</feature>
<feature type="chain" id="PRO_0000040933" description="Nucleocapsid protein p14">
    <location>
        <begin position="497"/>
        <end position="591"/>
    </location>
</feature>
<feature type="zinc finger region" description="CCHC-type 1" evidence="2">
    <location>
        <begin position="525"/>
        <end position="542"/>
    </location>
</feature>
<feature type="zinc finger region" description="CCHC-type 2" evidence="2">
    <location>
        <begin position="552"/>
        <end position="569"/>
    </location>
</feature>
<feature type="region of interest" description="Disordered" evidence="3">
    <location>
        <begin position="154"/>
        <end position="193"/>
    </location>
</feature>
<feature type="region of interest" description="Disordered" evidence="3">
    <location>
        <begin position="568"/>
        <end position="591"/>
    </location>
</feature>
<feature type="short sequence motif" description="PTAP/PSAP motif" evidence="6">
    <location>
        <begin position="305"/>
        <end position="308"/>
    </location>
</feature>
<feature type="compositionally biased region" description="Basic and acidic residues" evidence="3">
    <location>
        <begin position="154"/>
        <end position="169"/>
    </location>
</feature>
<feature type="compositionally biased region" description="Basic and acidic residues" evidence="3">
    <location>
        <begin position="178"/>
        <end position="193"/>
    </location>
</feature>
<feature type="site" description="Cleavage; by viral protease" evidence="4">
    <location>
        <begin position="99"/>
        <end position="100"/>
    </location>
</feature>
<feature type="site" description="Cleavage; by viral protease" evidence="4">
    <location>
        <begin position="195"/>
        <end position="196"/>
    </location>
</feature>
<feature type="site" description="Cleavage; by viral protease" evidence="4">
    <location>
        <begin position="228"/>
        <end position="229"/>
    </location>
</feature>
<feature type="site" description="Cleavage; by viral protease" evidence="1">
    <location>
        <begin position="254"/>
        <end position="255"/>
    </location>
</feature>
<feature type="site" description="Cleavage; by viral protease" evidence="4">
    <location>
        <begin position="269"/>
        <end position="270"/>
    </location>
</feature>
<feature type="site" description="Cleavage; by viral protease" evidence="4">
    <location>
        <begin position="496"/>
        <end position="497"/>
    </location>
</feature>
<feature type="lipid moiety-binding region" description="N-myristoyl glycine; by host" evidence="4">
    <location>
        <position position="2"/>
    </location>
</feature>
<feature type="sequence variant">
    <original>K</original>
    <variation>E</variation>
    <location>
        <position position="523"/>
    </location>
</feature>
<feature type="sequence conflict" description="In Ref. 3; AA sequence." evidence="6" ref="3">
    <original>S</original>
    <variation>T</variation>
    <location>
        <position position="106"/>
    </location>
</feature>
<feature type="sequence conflict" description="In Ref. 3; AA sequence." evidence="6" ref="3">
    <original>D</original>
    <variation>N</variation>
    <location>
        <position position="203"/>
    </location>
</feature>
<feature type="sequence conflict" description="In Ref. 1; AAF31472." evidence="6" ref="1">
    <original>V</original>
    <variation>M</variation>
    <location>
        <position position="440"/>
    </location>
</feature>
<feature type="turn" evidence="7">
    <location>
        <begin position="528"/>
        <end position="530"/>
    </location>
</feature>
<feature type="strand" evidence="7">
    <location>
        <begin position="533"/>
        <end position="535"/>
    </location>
</feature>
<feature type="turn" evidence="7">
    <location>
        <begin position="537"/>
        <end position="541"/>
    </location>
</feature>
<feature type="turn" evidence="8">
    <location>
        <begin position="555"/>
        <end position="557"/>
    </location>
</feature>
<feature type="strand" evidence="8">
    <location>
        <begin position="559"/>
        <end position="562"/>
    </location>
</feature>
<feature type="turn" evidence="8">
    <location>
        <begin position="564"/>
        <end position="566"/>
    </location>
</feature>
<feature type="strand" evidence="8">
    <location>
        <begin position="570"/>
        <end position="572"/>
    </location>
</feature>
<feature type="helix" evidence="8">
    <location>
        <begin position="573"/>
        <end position="575"/>
    </location>
</feature>
<name>GAG_MMTVC</name>
<accession>P11284</accession>
<accession>Q9IZT1</accession>